<keyword id="KW-0002">3D-structure</keyword>
<keyword id="KW-1003">Cell membrane</keyword>
<keyword id="KW-0209">Deafness</keyword>
<keyword id="KW-0225">Disease variant</keyword>
<keyword id="KW-0297">G-protein coupled receptor</keyword>
<keyword id="KW-0325">Glycoprotein</keyword>
<keyword id="KW-0449">Lipoprotein</keyword>
<keyword id="KW-0472">Membrane</keyword>
<keyword id="KW-1010">Non-syndromic deafness</keyword>
<keyword id="KW-0564">Palmitate</keyword>
<keyword id="KW-1267">Proteomics identification</keyword>
<keyword id="KW-0675">Receptor</keyword>
<keyword id="KW-1185">Reference proteome</keyword>
<keyword id="KW-0807">Transducer</keyword>
<keyword id="KW-0812">Transmembrane</keyword>
<keyword id="KW-1133">Transmembrane helix</keyword>
<dbReference type="EMBL" id="AF034780">
    <property type="protein sequence ID" value="AAC98919.1"/>
    <property type="molecule type" value="mRNA"/>
</dbReference>
<dbReference type="EMBL" id="AY262688">
    <property type="protein sequence ID" value="AAP20652.1"/>
    <property type="molecule type" value="Genomic_DNA"/>
</dbReference>
<dbReference type="EMBL" id="BC069598">
    <property type="protein sequence ID" value="AAH69598.1"/>
    <property type="molecule type" value="mRNA"/>
</dbReference>
<dbReference type="CCDS" id="CCDS12229.1"/>
<dbReference type="RefSeq" id="NP_004221.3">
    <property type="nucleotide sequence ID" value="NM_004230.3"/>
</dbReference>
<dbReference type="PDB" id="7T6B">
    <property type="method" value="EM"/>
    <property type="resolution" value="3.19 A"/>
    <property type="chains" value="R=1-353"/>
</dbReference>
<dbReference type="PDBsum" id="7T6B"/>
<dbReference type="EMDB" id="EMD-25712"/>
<dbReference type="SMR" id="O95136"/>
<dbReference type="BioGRID" id="114708">
    <property type="interactions" value="50"/>
</dbReference>
<dbReference type="CORUM" id="O95136"/>
<dbReference type="DIP" id="DIP-60682N"/>
<dbReference type="FunCoup" id="O95136">
    <property type="interactions" value="1173"/>
</dbReference>
<dbReference type="IntAct" id="O95136">
    <property type="interactions" value="31"/>
</dbReference>
<dbReference type="STRING" id="9606.ENSP00000496438"/>
<dbReference type="BindingDB" id="O95136"/>
<dbReference type="ChEMBL" id="CHEMBL2955"/>
<dbReference type="DrugBank" id="DB18296">
    <property type="generic name" value="AB-22"/>
</dbReference>
<dbReference type="DrugBank" id="DB17074">
    <property type="generic name" value="Amiselimod"/>
</dbReference>
<dbReference type="DrugCentral" id="O95136"/>
<dbReference type="GuidetoPHARMACOLOGY" id="276"/>
<dbReference type="GlyCosmos" id="O95136">
    <property type="glycosylation" value="1 site, No reported glycans"/>
</dbReference>
<dbReference type="GlyGen" id="O95136">
    <property type="glycosylation" value="1 site, 1 N-linked glycan (1 site)"/>
</dbReference>
<dbReference type="iPTMnet" id="O95136"/>
<dbReference type="PhosphoSitePlus" id="O95136"/>
<dbReference type="SwissPalm" id="O95136"/>
<dbReference type="BioMuta" id="S1PR2"/>
<dbReference type="jPOST" id="O95136"/>
<dbReference type="MassIVE" id="O95136"/>
<dbReference type="PaxDb" id="9606-ENSP00000466933"/>
<dbReference type="PeptideAtlas" id="O95136"/>
<dbReference type="ProteomicsDB" id="50657"/>
<dbReference type="Antibodypedia" id="65016">
    <property type="antibodies" value="328 antibodies from 34 providers"/>
</dbReference>
<dbReference type="DNASU" id="9294"/>
<dbReference type="Ensembl" id="ENST00000646641.1">
    <property type="protein sequence ID" value="ENSP00000496438.1"/>
    <property type="gene ID" value="ENSG00000267534.4"/>
</dbReference>
<dbReference type="GeneID" id="9294"/>
<dbReference type="KEGG" id="hsa:9294"/>
<dbReference type="MANE-Select" id="ENST00000646641.1">
    <property type="protein sequence ID" value="ENSP00000496438.1"/>
    <property type="RefSeq nucleotide sequence ID" value="NM_004230.4"/>
    <property type="RefSeq protein sequence ID" value="NP_004221.3"/>
</dbReference>
<dbReference type="UCSC" id="uc002mnl.3">
    <property type="organism name" value="human"/>
</dbReference>
<dbReference type="AGR" id="HGNC:3169"/>
<dbReference type="CTD" id="9294"/>
<dbReference type="DisGeNET" id="9294"/>
<dbReference type="GeneCards" id="S1PR2"/>
<dbReference type="HGNC" id="HGNC:3169">
    <property type="gene designation" value="S1PR2"/>
</dbReference>
<dbReference type="HPA" id="ENSG00000267534">
    <property type="expression patterns" value="Low tissue specificity"/>
</dbReference>
<dbReference type="MalaCards" id="S1PR2"/>
<dbReference type="MIM" id="605111">
    <property type="type" value="gene"/>
</dbReference>
<dbReference type="MIM" id="610419">
    <property type="type" value="phenotype"/>
</dbReference>
<dbReference type="neXtProt" id="NX_O95136"/>
<dbReference type="OpenTargets" id="ENSG00000267534"/>
<dbReference type="Orphanet" id="90636">
    <property type="disease" value="Rare autosomal recessive non-syndromic sensorineural deafness type DFNB"/>
</dbReference>
<dbReference type="PharmGKB" id="PA162402353"/>
<dbReference type="VEuPathDB" id="HostDB:ENSG00000267534"/>
<dbReference type="eggNOG" id="ENOG502QVQY">
    <property type="taxonomic scope" value="Eukaryota"/>
</dbReference>
<dbReference type="GeneTree" id="ENSGT01050000244887"/>
<dbReference type="HOGENOM" id="CLU_047979_1_0_1"/>
<dbReference type="InParanoid" id="O95136"/>
<dbReference type="OMA" id="ACWVTSI"/>
<dbReference type="OrthoDB" id="10051098at2759"/>
<dbReference type="PAN-GO" id="O95136">
    <property type="GO annotations" value="6 GO annotations based on evolutionary models"/>
</dbReference>
<dbReference type="PhylomeDB" id="O95136"/>
<dbReference type="PathwayCommons" id="O95136"/>
<dbReference type="Reactome" id="R-HSA-418594">
    <property type="pathway name" value="G alpha (i) signalling events"/>
</dbReference>
<dbReference type="Reactome" id="R-HSA-419408">
    <property type="pathway name" value="Lysosphingolipid and LPA receptors"/>
</dbReference>
<dbReference type="SignaLink" id="O95136"/>
<dbReference type="SIGNOR" id="O95136"/>
<dbReference type="BioGRID-ORCS" id="9294">
    <property type="hits" value="8 hits in 1151 CRISPR screens"/>
</dbReference>
<dbReference type="ChiTaRS" id="S1PR2">
    <property type="organism name" value="human"/>
</dbReference>
<dbReference type="GeneWiki" id="S1PR2"/>
<dbReference type="GenomeRNAi" id="9294"/>
<dbReference type="Pharos" id="O95136">
    <property type="development level" value="Tchem"/>
</dbReference>
<dbReference type="PRO" id="PR:O95136"/>
<dbReference type="Proteomes" id="UP000005640">
    <property type="component" value="Chromosome 19"/>
</dbReference>
<dbReference type="RNAct" id="O95136">
    <property type="molecule type" value="protein"/>
</dbReference>
<dbReference type="Bgee" id="ENSG00000267534">
    <property type="expression patterns" value="Expressed in heart right ventricle and 167 other cell types or tissues"/>
</dbReference>
<dbReference type="ExpressionAtlas" id="O95136">
    <property type="expression patterns" value="baseline and differential"/>
</dbReference>
<dbReference type="GO" id="GO:0005737">
    <property type="term" value="C:cytoplasm"/>
    <property type="evidence" value="ECO:0000318"/>
    <property type="project" value="GO_Central"/>
</dbReference>
<dbReference type="GO" id="GO:0098978">
    <property type="term" value="C:glutamatergic synapse"/>
    <property type="evidence" value="ECO:0007669"/>
    <property type="project" value="Ensembl"/>
</dbReference>
<dbReference type="GO" id="GO:0005886">
    <property type="term" value="C:plasma membrane"/>
    <property type="evidence" value="ECO:0000314"/>
    <property type="project" value="UniProtKB"/>
</dbReference>
<dbReference type="GO" id="GO:0098794">
    <property type="term" value="C:postsynapse"/>
    <property type="evidence" value="ECO:0007669"/>
    <property type="project" value="GOC"/>
</dbReference>
<dbReference type="GO" id="GO:0098793">
    <property type="term" value="C:presynapse"/>
    <property type="evidence" value="ECO:0007669"/>
    <property type="project" value="Ensembl"/>
</dbReference>
<dbReference type="GO" id="GO:0008528">
    <property type="term" value="F:G protein-coupled peptide receptor activity"/>
    <property type="evidence" value="ECO:0000353"/>
    <property type="project" value="MGI"/>
</dbReference>
<dbReference type="GO" id="GO:0004930">
    <property type="term" value="F:G protein-coupled receptor activity"/>
    <property type="evidence" value="ECO:0000304"/>
    <property type="project" value="ProtInc"/>
</dbReference>
<dbReference type="GO" id="GO:0001664">
    <property type="term" value="F:G protein-coupled receptor binding"/>
    <property type="evidence" value="ECO:0000353"/>
    <property type="project" value="UniProtKB"/>
</dbReference>
<dbReference type="GO" id="GO:0005178">
    <property type="term" value="F:integrin binding"/>
    <property type="evidence" value="ECO:0000353"/>
    <property type="project" value="UniProtKB"/>
</dbReference>
<dbReference type="GO" id="GO:0008289">
    <property type="term" value="F:lipid binding"/>
    <property type="evidence" value="ECO:0000304"/>
    <property type="project" value="ProtInc"/>
</dbReference>
<dbReference type="GO" id="GO:0038036">
    <property type="term" value="F:sphingosine-1-phosphate receptor activity"/>
    <property type="evidence" value="ECO:0000314"/>
    <property type="project" value="MGI"/>
</dbReference>
<dbReference type="GO" id="GO:0030036">
    <property type="term" value="P:actin cytoskeleton organization"/>
    <property type="evidence" value="ECO:0000315"/>
    <property type="project" value="UniProtKB"/>
</dbReference>
<dbReference type="GO" id="GO:0007189">
    <property type="term" value="P:adenylate cyclase-activating G protein-coupled receptor signaling pathway"/>
    <property type="evidence" value="ECO:0000318"/>
    <property type="project" value="GO_Central"/>
</dbReference>
<dbReference type="GO" id="GO:0060079">
    <property type="term" value="P:excitatory postsynaptic potential"/>
    <property type="evidence" value="ECO:0007669"/>
    <property type="project" value="Ensembl"/>
</dbReference>
<dbReference type="GO" id="GO:0046847">
    <property type="term" value="P:filopodium assembly"/>
    <property type="evidence" value="ECO:0000315"/>
    <property type="project" value="UniProtKB"/>
</dbReference>
<dbReference type="GO" id="GO:0007186">
    <property type="term" value="P:G protein-coupled receptor signaling pathway"/>
    <property type="evidence" value="ECO:0000314"/>
    <property type="project" value="MGI"/>
</dbReference>
<dbReference type="GO" id="GO:0090394">
    <property type="term" value="P:negative regulation of excitatory postsynaptic potential"/>
    <property type="evidence" value="ECO:0007669"/>
    <property type="project" value="Ensembl"/>
</dbReference>
<dbReference type="GO" id="GO:0008284">
    <property type="term" value="P:positive regulation of cell population proliferation"/>
    <property type="evidence" value="ECO:0000304"/>
    <property type="project" value="ProtInc"/>
</dbReference>
<dbReference type="GO" id="GO:1903142">
    <property type="term" value="P:positive regulation of establishment of endothelial barrier"/>
    <property type="evidence" value="ECO:0000315"/>
    <property type="project" value="UniProtKB"/>
</dbReference>
<dbReference type="GO" id="GO:0010800">
    <property type="term" value="P:positive regulation of peptidyl-threonine phosphorylation"/>
    <property type="evidence" value="ECO:0000315"/>
    <property type="project" value="UniProtKB"/>
</dbReference>
<dbReference type="GO" id="GO:0019222">
    <property type="term" value="P:regulation of metabolic process"/>
    <property type="evidence" value="ECO:0000318"/>
    <property type="project" value="GO_Central"/>
</dbReference>
<dbReference type="GO" id="GO:0150052">
    <property type="term" value="P:regulation of postsynapse assembly"/>
    <property type="evidence" value="ECO:0007669"/>
    <property type="project" value="Ensembl"/>
</dbReference>
<dbReference type="GO" id="GO:0003376">
    <property type="term" value="P:sphingosine-1-phosphate receptor signaling pathway"/>
    <property type="evidence" value="ECO:0000315"/>
    <property type="project" value="UniProtKB"/>
</dbReference>
<dbReference type="CDD" id="cd15347">
    <property type="entry name" value="7tmA_S1PR2_Edg5"/>
    <property type="match status" value="1"/>
</dbReference>
<dbReference type="FunFam" id="1.20.1070.10:FF:000098">
    <property type="entry name" value="Sphingosine 1-phosphate receptor 1"/>
    <property type="match status" value="1"/>
</dbReference>
<dbReference type="Gene3D" id="1.20.1070.10">
    <property type="entry name" value="Rhodopsin 7-helix transmembrane proteins"/>
    <property type="match status" value="1"/>
</dbReference>
<dbReference type="InterPro" id="IPR004063">
    <property type="entry name" value="EDG5_rcpt"/>
</dbReference>
<dbReference type="InterPro" id="IPR000276">
    <property type="entry name" value="GPCR_Rhodpsn"/>
</dbReference>
<dbReference type="InterPro" id="IPR017452">
    <property type="entry name" value="GPCR_Rhodpsn_7TM"/>
</dbReference>
<dbReference type="InterPro" id="IPR004061">
    <property type="entry name" value="S1P_rcpt"/>
</dbReference>
<dbReference type="PANTHER" id="PTHR22750">
    <property type="entry name" value="G-PROTEIN COUPLED RECEPTOR"/>
    <property type="match status" value="1"/>
</dbReference>
<dbReference type="Pfam" id="PF00001">
    <property type="entry name" value="7tm_1"/>
    <property type="match status" value="1"/>
</dbReference>
<dbReference type="PRINTS" id="PR01525">
    <property type="entry name" value="EDG5RECEPTOR"/>
</dbReference>
<dbReference type="PRINTS" id="PR00237">
    <property type="entry name" value="GPCRRHODOPSN"/>
</dbReference>
<dbReference type="PRINTS" id="PR01523">
    <property type="entry name" value="S1PRECEPTOR"/>
</dbReference>
<dbReference type="SMART" id="SM01381">
    <property type="entry name" value="7TM_GPCR_Srsx"/>
    <property type="match status" value="1"/>
</dbReference>
<dbReference type="SUPFAM" id="SSF81321">
    <property type="entry name" value="Family A G protein-coupled receptor-like"/>
    <property type="match status" value="1"/>
</dbReference>
<dbReference type="PROSITE" id="PS00237">
    <property type="entry name" value="G_PROTEIN_RECEP_F1_1"/>
    <property type="match status" value="1"/>
</dbReference>
<dbReference type="PROSITE" id="PS50262">
    <property type="entry name" value="G_PROTEIN_RECEP_F1_2"/>
    <property type="match status" value="1"/>
</dbReference>
<comment type="function">
    <text evidence="2 5 6 8">Receptor for the lysosphingolipid sphingosine 1-phosphate (S1P) (PubMed:10617617, PubMed:25274307). S1P is a bioactive lysophospholipid that elicits diverse physiological effects on most types of cells and tissues (PubMed:10617617). When expressed in rat HTC4 hepatoma cells, is capable of mediating S1P-induced cell proliferation and suppression of apoptosis (PubMed:10617617). Receptor for the chemokine-like protein FAM19A5 (PubMed:29453251). Mediates the inhibitory effect of FAM19A5 on vascular smooth muscle cell proliferation and migration (By similarity). In lymphoid follicles, couples the binding of S1P to the activation of GNA13 and downstream inhibition of AKT activation leading to suppression of germinal center (GC) B cell growth and migration outside the GC niche.</text>
</comment>
<comment type="interaction">
    <interactant intactId="EBI-10634606">
        <id>O95136</id>
    </interactant>
    <interactant intactId="EBI-948678">
        <id>P16144</id>
        <label>ITGB4</label>
    </interactant>
    <organismsDiffer>false</organismsDiffer>
    <experiments>2</experiments>
</comment>
<comment type="interaction">
    <interactant intactId="EBI-10634606">
        <id>O95136</id>
    </interactant>
    <interactant intactId="EBI-919989">
        <id>Q9JK11-1</id>
        <label>Rtn4</label>
    </interactant>
    <organismsDiffer>true</organismsDiffer>
    <experiments>2</experiments>
</comment>
<comment type="subcellular location">
    <subcellularLocation>
        <location evidence="6">Cell membrane</location>
        <topology evidence="3">Multi-pass membrane protein</topology>
    </subcellularLocation>
</comment>
<comment type="disease" evidence="7">
    <disease id="DI-04685">
        <name>Deafness, autosomal recessive, 68</name>
        <acronym>DFNB68</acronym>
        <description>A form of non-syndromic sensorineural hearing loss. Sensorineural deafness results from damage to the neural receptors of the inner ear, the nerve pathways to the brain, or the area of the brain that receives sound information.</description>
        <dbReference type="MIM" id="610419"/>
    </disease>
    <text>The disease is caused by variants affecting the gene represented in this entry.</text>
</comment>
<comment type="similarity">
    <text evidence="4">Belongs to the G-protein coupled receptor 1 family.</text>
</comment>
<reference key="1">
    <citation type="journal article" date="2000" name="J. Biol. Chem.">
        <title>Sphingosine 1-phosphate-induced cell proliferation, survival, and related signaling events mediated by G protein-coupled receptors Edg3 and Edg5.</title>
        <authorList>
            <person name="An S."/>
            <person name="Zheng Y."/>
            <person name="Bleu T."/>
        </authorList>
    </citation>
    <scope>NUCLEOTIDE SEQUENCE [MRNA]</scope>
    <scope>FUNCTION</scope>
    <source>
        <tissue>Fetal brain</tissue>
    </source>
</reference>
<reference key="2">
    <citation type="submission" date="2003-03" db="EMBL/GenBank/DDBJ databases">
        <title>cDNA clones of human proteins involved in signal transduction sequenced by the Guthrie cDNA resource center (www.cdna.org).</title>
        <authorList>
            <person name="Kopatz S.A."/>
            <person name="Aronstam R.S."/>
            <person name="Sharma S.V."/>
        </authorList>
    </citation>
    <scope>NUCLEOTIDE SEQUENCE [LARGE SCALE MRNA]</scope>
</reference>
<reference key="3">
    <citation type="journal article" date="2004" name="Genome Res.">
        <title>The status, quality, and expansion of the NIH full-length cDNA project: the Mammalian Gene Collection (MGC).</title>
        <authorList>
            <consortium name="The MGC Project Team"/>
        </authorList>
    </citation>
    <scope>NUCLEOTIDE SEQUENCE [LARGE SCALE MRNA]</scope>
</reference>
<reference key="4">
    <citation type="journal article" date="2014" name="Nature">
        <title>Loss of signalling via Galpha13 in germinal centre B-cell-derived lymphoma.</title>
        <authorList>
            <person name="Muppidi J.R."/>
            <person name="Schmitz R."/>
            <person name="Green J.A."/>
            <person name="Xiao W."/>
            <person name="Larsen A.B."/>
            <person name="Braun S.E."/>
            <person name="An J."/>
            <person name="Xu Y."/>
            <person name="Rosenwald A."/>
            <person name="Ott G."/>
            <person name="Gascoyne R.D."/>
            <person name="Rimsza L.M."/>
            <person name="Campo E."/>
            <person name="Jaffe E.S."/>
            <person name="Delabie J."/>
            <person name="Smeland E.B."/>
            <person name="Braziel R.M."/>
            <person name="Tubbs R.R."/>
            <person name="Cook J.R."/>
            <person name="Weisenburger D.D."/>
            <person name="Chan W.C."/>
            <person name="Vaidehi N."/>
            <person name="Staudt L.M."/>
            <person name="Cyster J.G."/>
        </authorList>
    </citation>
    <scope>FUNCTION</scope>
    <scope>SUBCELLULAR LOCATION</scope>
    <scope>MUTAGENESIS OF ARG-147; TRP-156; VAL-194; CYS-245; PRO-248; ASP-256; TYR-272 AND ARG-329</scope>
</reference>
<reference key="5">
    <citation type="journal article" date="2016" name="Am. J. Hum. Genet.">
        <title>Autosomal-recessive hearing impairment due to rare missense variants within S1PR2.</title>
        <authorList>
            <consortium name="University of Washington Center for Mendelian Genomics"/>
            <person name="Santos-Cortez R.L."/>
            <person name="Faridi R."/>
            <person name="Rehman A.U."/>
            <person name="Lee K."/>
            <person name="Ansar M."/>
            <person name="Wang X."/>
            <person name="Morell R.J."/>
            <person name="Isaacson R."/>
            <person name="Belyantseva I.A."/>
            <person name="Dai H."/>
            <person name="Acharya A."/>
            <person name="Qaiser T.A."/>
            <person name="Muhammad D."/>
            <person name="Ali R.A."/>
            <person name="Shams S."/>
            <person name="Hassan M.J."/>
            <person name="Shahzad S."/>
            <person name="Raza S.I."/>
            <person name="Bashir Z.E."/>
            <person name="Smith J.D."/>
            <person name="Nickerson D.A."/>
            <person name="Bamshad M.J."/>
            <person name="Riazuddin S."/>
            <person name="Ahmad W."/>
            <person name="Friedman T.B."/>
            <person name="Leal S.M."/>
        </authorList>
    </citation>
    <scope>VARIANTS DFNB68 PRO-108 AND CYS-140</scope>
</reference>
<reference key="6">
    <citation type="journal article" date="2018" name="Circulation">
        <title>Novel Adipokine, FAM19A5, Inhibits Neointima Formation After Injury Through Sphingosine-1-Phosphate Receptor 2.</title>
        <authorList>
            <person name="Wang Y."/>
            <person name="Chen D."/>
            <person name="Zhang Y."/>
            <person name="Wang P."/>
            <person name="Zheng C."/>
            <person name="Zhang S."/>
            <person name="Yu B."/>
            <person name="Zhang L."/>
            <person name="Zhao G."/>
            <person name="Ma B."/>
            <person name="Cai Z."/>
            <person name="Xie N."/>
            <person name="Huang S."/>
            <person name="Liu Z."/>
            <person name="Mo X."/>
            <person name="Guan Y."/>
            <person name="Wang X."/>
            <person name="Fu Y."/>
            <person name="Ma D."/>
            <person name="Wang Y."/>
            <person name="Kong W."/>
        </authorList>
    </citation>
    <scope>FUNCTION</scope>
</reference>
<name>S1PR2_HUMAN</name>
<accession>O95136</accession>
<accession>Q86UN8</accession>
<sequence>MGSLYSEYLNPNKVQEHYNYTKETLETQETTSRQVASAFIVILCCAIVVENLLVLIAVARNSKFHSAMYLFLGNLAASDLLAGVAFVANTLLSGSVTLRLTPVQWFAREGSAFITLSASVFSLLAIAIERHVAIAKVKLYGSDKSCRMLLLIGASWLISLVLGGLPILGWNCLGHLEACSTVLPLYAKHYVLCVVTIFSIILLAIVALYVRIYCVVRSSHADMAAPQTLALLKTVTIVLGVFIVCWLPAFSILLLDYACPVHSCPILYKAHYFFAVSTLNSLLNPVIYTWRSRDLRREVLRPLQCWRPGVGVQGRRRGGTPGHHLLPLRSSSSLERGMHMPTSPTFLEGNTVV</sequence>
<gene>
    <name type="primary">S1PR2</name>
    <name type="synonym">EDG5</name>
</gene>
<protein>
    <recommendedName>
        <fullName>Sphingosine 1-phosphate receptor 2</fullName>
        <shortName>S1P receptor 2</shortName>
        <shortName>S1P2</shortName>
    </recommendedName>
    <alternativeName>
        <fullName>Endothelial differentiation G-protein coupled receptor 5</fullName>
    </alternativeName>
    <alternativeName>
        <fullName>Sphingosine 1-phosphate receptor Edg-5</fullName>
        <shortName>S1P receptor Edg-5</shortName>
    </alternativeName>
</protein>
<organism>
    <name type="scientific">Homo sapiens</name>
    <name type="common">Human</name>
    <dbReference type="NCBI Taxonomy" id="9606"/>
    <lineage>
        <taxon>Eukaryota</taxon>
        <taxon>Metazoa</taxon>
        <taxon>Chordata</taxon>
        <taxon>Craniata</taxon>
        <taxon>Vertebrata</taxon>
        <taxon>Euteleostomi</taxon>
        <taxon>Mammalia</taxon>
        <taxon>Eutheria</taxon>
        <taxon>Euarchontoglires</taxon>
        <taxon>Primates</taxon>
        <taxon>Haplorrhini</taxon>
        <taxon>Catarrhini</taxon>
        <taxon>Hominidae</taxon>
        <taxon>Homo</taxon>
    </lineage>
</organism>
<proteinExistence type="evidence at protein level"/>
<evidence type="ECO:0000250" key="1"/>
<evidence type="ECO:0000250" key="2">
    <source>
        <dbReference type="UniProtKB" id="P47752"/>
    </source>
</evidence>
<evidence type="ECO:0000255" key="3"/>
<evidence type="ECO:0000255" key="4">
    <source>
        <dbReference type="PROSITE-ProRule" id="PRU00521"/>
    </source>
</evidence>
<evidence type="ECO:0000269" key="5">
    <source>
    </source>
</evidence>
<evidence type="ECO:0000269" key="6">
    <source>
    </source>
</evidence>
<evidence type="ECO:0000269" key="7">
    <source>
    </source>
</evidence>
<evidence type="ECO:0000269" key="8">
    <source>
    </source>
</evidence>
<evidence type="ECO:0000305" key="9"/>
<evidence type="ECO:0007829" key="10">
    <source>
        <dbReference type="PDB" id="7T6B"/>
    </source>
</evidence>
<feature type="chain" id="PRO_0000069427" description="Sphingosine 1-phosphate receptor 2">
    <location>
        <begin position="1"/>
        <end position="353"/>
    </location>
</feature>
<feature type="topological domain" description="Extracellular" evidence="1">
    <location>
        <begin position="1"/>
        <end position="34"/>
    </location>
</feature>
<feature type="transmembrane region" description="Helical; Name=1" evidence="1">
    <location>
        <begin position="35"/>
        <end position="59"/>
    </location>
</feature>
<feature type="topological domain" description="Cytoplasmic" evidence="1">
    <location>
        <begin position="60"/>
        <end position="66"/>
    </location>
</feature>
<feature type="transmembrane region" description="Helical; Name=2" evidence="1">
    <location>
        <begin position="67"/>
        <end position="95"/>
    </location>
</feature>
<feature type="topological domain" description="Extracellular" evidence="1">
    <location>
        <begin position="96"/>
        <end position="109"/>
    </location>
</feature>
<feature type="transmembrane region" description="Helical; Name=3" evidence="1">
    <location>
        <begin position="110"/>
        <end position="128"/>
    </location>
</feature>
<feature type="topological domain" description="Cytoplasmic" evidence="1">
    <location>
        <begin position="129"/>
        <end position="147"/>
    </location>
</feature>
<feature type="transmembrane region" description="Helical; Name=4" evidence="1">
    <location>
        <begin position="148"/>
        <end position="173"/>
    </location>
</feature>
<feature type="topological domain" description="Extracellular" evidence="1">
    <location>
        <begin position="174"/>
        <end position="189"/>
    </location>
</feature>
<feature type="transmembrane region" description="Helical; Name=5" evidence="1">
    <location>
        <begin position="190"/>
        <end position="210"/>
    </location>
</feature>
<feature type="topological domain" description="Cytoplasmic" evidence="1">
    <location>
        <begin position="211"/>
        <end position="233"/>
    </location>
</feature>
<feature type="transmembrane region" description="Helical; Name=6" evidence="1">
    <location>
        <begin position="234"/>
        <end position="255"/>
    </location>
</feature>
<feature type="topological domain" description="Extracellular" evidence="1">
    <location>
        <begin position="256"/>
        <end position="271"/>
    </location>
</feature>
<feature type="transmembrane region" description="Helical; Name=7" evidence="1">
    <location>
        <begin position="272"/>
        <end position="292"/>
    </location>
</feature>
<feature type="topological domain" description="Cytoplasmic" evidence="1">
    <location>
        <begin position="293"/>
        <end position="353"/>
    </location>
</feature>
<feature type="lipid moiety-binding region" description="S-palmitoyl cysteine" evidence="1">
    <location>
        <position position="305"/>
    </location>
</feature>
<feature type="glycosylation site" description="N-linked (GlcNAc...) asparagine" evidence="3">
    <location>
        <position position="19"/>
    </location>
</feature>
<feature type="sequence variant" id="VAR_076391" description="In DFNB68; dbSNP:rs869312749." evidence="7">
    <original>R</original>
    <variation>P</variation>
    <location>
        <position position="108"/>
    </location>
</feature>
<feature type="sequence variant" id="VAR_076392" description="In DFNB68; dbSNP:rs869312750." evidence="7">
    <original>Y</original>
    <variation>C</variation>
    <location>
        <position position="140"/>
    </location>
</feature>
<feature type="mutagenesis site" description="No effect on protein expression at the cell surface. Decreases S1PR2-mediated inhibition of AKT activation and B cell migration. Loss of S1PR2-dependent inhibition of GC B cell growth." evidence="6">
    <original>R</original>
    <variation>C</variation>
    <location>
        <position position="147"/>
    </location>
</feature>
<feature type="mutagenesis site" description="Loss of protein expression." evidence="6">
    <original>W</original>
    <variation>G</variation>
    <location>
        <position position="156"/>
    </location>
</feature>
<feature type="mutagenesis site" description="Loss of protein expression." evidence="6">
    <original>V</original>
    <variation>E</variation>
    <location>
        <position position="194"/>
    </location>
</feature>
<feature type="mutagenesis site" description="Markedly decreases protein expression." evidence="6">
    <original>C</original>
    <variation>R</variation>
    <location>
        <position position="245"/>
    </location>
</feature>
<feature type="mutagenesis site" description="Loss of protein expression." evidence="6">
    <original>P</original>
    <variation>S</variation>
    <location>
        <position position="248"/>
    </location>
</feature>
<feature type="mutagenesis site" description="Loss of protein expression." evidence="6">
    <original>D</original>
    <variation>E</variation>
    <location>
        <position position="256"/>
    </location>
</feature>
<feature type="mutagenesis site" description="Decreases protein expression. No effect on S1P-mediated inhibition of AKT signaling, GC B cell growth and migration." evidence="6">
    <original>Y</original>
    <variation>N</variation>
    <location>
        <position position="272"/>
    </location>
</feature>
<feature type="mutagenesis site" description="No effect on protein expression or S1PR2-mediated inhibition of AKT activation and B cell migration." evidence="6">
    <original>R</original>
    <variation>C</variation>
    <location>
        <position position="329"/>
    </location>
</feature>
<feature type="sequence conflict" description="In Ref. 1; AAC98919." evidence="9" ref="1">
    <original>F</original>
    <variation>S</variation>
    <location>
        <position position="113"/>
    </location>
</feature>
<feature type="sequence conflict" description="In Ref. 1; AAC98919." evidence="9" ref="1">
    <original>G</original>
    <variation>V</variation>
    <location>
        <position position="318"/>
    </location>
</feature>
<feature type="helix" evidence="10">
    <location>
        <begin position="14"/>
        <end position="20"/>
    </location>
</feature>
<feature type="helix" evidence="10">
    <location>
        <begin position="34"/>
        <end position="60"/>
    </location>
</feature>
<feature type="helix" evidence="10">
    <location>
        <begin position="68"/>
        <end position="90"/>
    </location>
</feature>
<feature type="helix" evidence="10">
    <location>
        <begin position="91"/>
        <end position="93"/>
    </location>
</feature>
<feature type="turn" evidence="10">
    <location>
        <begin position="95"/>
        <end position="97"/>
    </location>
</feature>
<feature type="helix" evidence="10">
    <location>
        <begin position="102"/>
        <end position="135"/>
    </location>
</feature>
<feature type="strand" evidence="10">
    <location>
        <begin position="136"/>
        <end position="138"/>
    </location>
</feature>
<feature type="helix" evidence="10">
    <location>
        <begin position="147"/>
        <end position="168"/>
    </location>
</feature>
<feature type="strand" evidence="10">
    <location>
        <begin position="181"/>
        <end position="183"/>
    </location>
</feature>
<feature type="helix" evidence="10">
    <location>
        <begin position="190"/>
        <end position="218"/>
    </location>
</feature>
<feature type="helix" evidence="10">
    <location>
        <begin position="229"/>
        <end position="236"/>
    </location>
</feature>
<feature type="helix" evidence="10">
    <location>
        <begin position="237"/>
        <end position="239"/>
    </location>
</feature>
<feature type="helix" evidence="10">
    <location>
        <begin position="240"/>
        <end position="258"/>
    </location>
</feature>
<feature type="turn" evidence="10">
    <location>
        <begin position="261"/>
        <end position="263"/>
    </location>
</feature>
<feature type="helix" evidence="10">
    <location>
        <begin position="267"/>
        <end position="269"/>
    </location>
</feature>
<feature type="helix" evidence="10">
    <location>
        <begin position="270"/>
        <end position="287"/>
    </location>
</feature>